<protein>
    <recommendedName>
        <fullName evidence="8">Testicular spindle-associated protein SHCBP1L</fullName>
    </recommendedName>
    <alternativeName>
        <fullName evidence="9">SHC SH2 domain-binding protein 1-like protein</fullName>
    </alternativeName>
</protein>
<feature type="chain" id="PRO_0000284838" description="Testicular spindle-associated protein SHCBP1L">
    <location>
        <begin position="1"/>
        <end position="653"/>
    </location>
</feature>
<feature type="repeat" description="PbH1 1">
    <location>
        <begin position="493"/>
        <end position="514"/>
    </location>
</feature>
<feature type="repeat" description="PbH1 2">
    <location>
        <begin position="515"/>
        <end position="537"/>
    </location>
</feature>
<feature type="repeat" description="PbH1 3">
    <location>
        <begin position="538"/>
        <end position="571"/>
    </location>
</feature>
<feature type="repeat" description="PbH1 4">
    <location>
        <begin position="574"/>
        <end position="596"/>
    </location>
</feature>
<feature type="region of interest" description="Disordered" evidence="3">
    <location>
        <begin position="1"/>
        <end position="65"/>
    </location>
</feature>
<feature type="coiled-coil region" evidence="2">
    <location>
        <begin position="299"/>
        <end position="326"/>
    </location>
</feature>
<feature type="compositionally biased region" description="Polar residues" evidence="3">
    <location>
        <begin position="28"/>
        <end position="41"/>
    </location>
</feature>
<feature type="compositionally biased region" description="Low complexity" evidence="3">
    <location>
        <begin position="46"/>
        <end position="56"/>
    </location>
</feature>
<feature type="modified residue" description="Phosphoserine" evidence="10">
    <location>
        <position position="8"/>
    </location>
</feature>
<feature type="modified residue" description="Phosphoserine" evidence="1">
    <location>
        <position position="53"/>
    </location>
</feature>
<feature type="modified residue" description="N6-acetyllysine" evidence="1">
    <location>
        <position position="570"/>
    </location>
</feature>
<feature type="modified residue" description="N6-acetyllysine" evidence="1">
    <location>
        <position position="645"/>
    </location>
</feature>
<feature type="splice variant" id="VSP_024673" description="In isoform 2." evidence="6">
    <location>
        <begin position="1"/>
        <end position="119"/>
    </location>
</feature>
<feature type="splice variant" id="VSP_024676" description="In isoform 2." evidence="6">
    <original>DEKVSLYCDEVLQDCK</original>
    <variation>MGFLQLVRLDSNSRPQ</variation>
    <location>
        <begin position="120"/>
        <end position="135"/>
    </location>
</feature>
<feature type="splice variant" id="VSP_024677" description="In isoform 4." evidence="7">
    <original>AEDADEVMGKYLSE</original>
    <variation>KMLMKLWVNTYQKN</variation>
    <location>
        <begin position="136"/>
        <end position="149"/>
    </location>
</feature>
<feature type="splice variant" id="VSP_024678" description="In isoform 4." evidence="7">
    <location>
        <begin position="150"/>
        <end position="653"/>
    </location>
</feature>
<feature type="sequence variant" id="VAR_031836" description="In dbSNP:rs12138972.">
    <original>V</original>
    <variation>M</variation>
    <location>
        <position position="491"/>
    </location>
</feature>
<feature type="sequence conflict" description="In Ref. 1; AAG60616/AAG60617." evidence="8" ref="1">
    <original>F</original>
    <variation>L</variation>
    <location>
        <position position="198"/>
    </location>
</feature>
<feature type="sequence conflict" description="In Ref. 1; AAG60616." evidence="8" ref="1">
    <original>I</original>
    <variation>L</variation>
    <location>
        <position position="249"/>
    </location>
</feature>
<keyword id="KW-0007">Acetylation</keyword>
<keyword id="KW-0025">Alternative splicing</keyword>
<keyword id="KW-0175">Coiled coil</keyword>
<keyword id="KW-0963">Cytoplasm</keyword>
<keyword id="KW-0206">Cytoskeleton</keyword>
<keyword id="KW-0221">Differentiation</keyword>
<keyword id="KW-0597">Phosphoprotein</keyword>
<keyword id="KW-1267">Proteomics identification</keyword>
<keyword id="KW-1185">Reference proteome</keyword>
<keyword id="KW-0677">Repeat</keyword>
<keyword id="KW-0744">Spermatogenesis</keyword>
<gene>
    <name evidence="9" type="primary">SHCBP1L</name>
    <name type="synonym">C1orf14</name>
</gene>
<comment type="function">
    <text evidence="1">Testis-specific spindle-associated factor that plays a role in spermatogenesis. In association with HSPA2, participates in the maintenance of spindle integrity during meiosis in male germ cells.</text>
</comment>
<comment type="subunit">
    <text evidence="1">Interacts with HSPA2; this interaction may promote the recruitment of HSPA2 to the spindle.</text>
</comment>
<comment type="interaction">
    <interactant intactId="EBI-10818532">
        <id>Q9BZQ2</id>
    </interactant>
    <interactant intactId="EBI-718729">
        <id>P55212</id>
        <label>CASP6</label>
    </interactant>
    <organismsDiffer>false</organismsDiffer>
    <experiments>3</experiments>
</comment>
<comment type="interaction">
    <interactant intactId="EBI-10818532">
        <id>Q9BZQ2</id>
    </interactant>
    <interactant intactId="EBI-473886">
        <id>O00291</id>
        <label>HIP1</label>
    </interactant>
    <organismsDiffer>false</organismsDiffer>
    <experiments>3</experiments>
</comment>
<comment type="interaction">
    <interactant intactId="EBI-10818532">
        <id>Q9BZQ2</id>
    </interactant>
    <interactant intactId="EBI-21591415">
        <id>P13473-2</id>
        <label>LAMP2</label>
    </interactant>
    <organismsDiffer>false</organismsDiffer>
    <experiments>3</experiments>
</comment>
<comment type="interaction">
    <interactant intactId="EBI-10818532">
        <id>Q9BZQ2</id>
    </interactant>
    <interactant intactId="EBI-5280197">
        <id>O75400-2</id>
        <label>PRPF40A</label>
    </interactant>
    <organismsDiffer>false</organismsDiffer>
    <experiments>3</experiments>
</comment>
<comment type="interaction">
    <interactant intactId="EBI-10818532">
        <id>Q9BZQ2</id>
    </interactant>
    <interactant intactId="EBI-2623095">
        <id>Q9Y371</id>
        <label>SH3GLB1</label>
    </interactant>
    <organismsDiffer>false</organismsDiffer>
    <experiments>3</experiments>
</comment>
<comment type="interaction">
    <interactant intactId="EBI-10818532">
        <id>Q9BZQ2</id>
    </interactant>
    <interactant intactId="EBI-5667516">
        <id>Q9Y2P0</id>
        <label>ZNF835</label>
    </interactant>
    <organismsDiffer>false</organismsDiffer>
    <experiments>3</experiments>
</comment>
<comment type="subcellular location">
    <subcellularLocation>
        <location evidence="1">Cytoplasm</location>
        <location evidence="1">Cytoskeleton</location>
        <location evidence="1">Spindle</location>
    </subcellularLocation>
    <text evidence="1">Colocalizes with alpha tubulin during meiosis. Colocalizes with HSPA2 at spindle during the meiosis process.</text>
</comment>
<comment type="alternative products">
    <event type="alternative splicing"/>
    <isoform>
        <id>Q9BZQ2-3</id>
        <name>3</name>
        <sequence type="displayed"/>
    </isoform>
    <isoform>
        <id>Q9BZQ2-2</id>
        <name>2</name>
        <sequence type="described" ref="VSP_024673 VSP_024676"/>
    </isoform>
    <isoform>
        <id>Q9BZQ2-4</id>
        <name>4</name>
        <sequence type="described" ref="VSP_024677 VSP_024678"/>
    </isoform>
</comment>
<comment type="tissue specificity">
    <text evidence="4 5">Expressed in spermatocytes and elongating spermatids inside the seminiferous tubules (at protein level) (PubMed:24557841). Testis-specific (PubMed:11318611, PubMed:24557841).</text>
</comment>
<comment type="sequence caution" evidence="8">
    <conflict type="frameshift">
        <sequence resource="EMBL-CDS" id="AAG60617"/>
    </conflict>
</comment>
<organism>
    <name type="scientific">Homo sapiens</name>
    <name type="common">Human</name>
    <dbReference type="NCBI Taxonomy" id="9606"/>
    <lineage>
        <taxon>Eukaryota</taxon>
        <taxon>Metazoa</taxon>
        <taxon>Chordata</taxon>
        <taxon>Craniata</taxon>
        <taxon>Vertebrata</taxon>
        <taxon>Euteleostomi</taxon>
        <taxon>Mammalia</taxon>
        <taxon>Eutheria</taxon>
        <taxon>Euarchontoglires</taxon>
        <taxon>Primates</taxon>
        <taxon>Haplorrhini</taxon>
        <taxon>Catarrhini</taxon>
        <taxon>Hominidae</taxon>
        <taxon>Homo</taxon>
    </lineage>
</organism>
<sequence length="653" mass="72632">MASGSKASVPADSFRTISPDRRGEKSASAVSGDTAAATTLKGTAIPVRSVVASPRPVKGKAGRETARLRLQRLPAAQAEDTGEAAAAAAEEPLLPVPEDEEEAQPLPPVCVSRMRGMWRDEKVSLYCDEVLQDCKAEDADEVMGKYLSEKLKLKDKWLGVWKTNPSVFFVKYEEASIPFVGILVEVTCEPYQDSSSRFKVTVSVAEPFSSNIANIPRDLVDEILEELEHSVPLLEVYPVEGQDTDIHVIALALEVVRFFYDFLWRDWDDEESCENYTALIEERINLWCDIQDGTIPGPIAQRFKKTLEKYKNKRVELIEYQSNIKEDPSAAEAVECWKKYYEIVMLCGLLKMWEDLRLRVHGPFFPRILRRRKGKREFGKTITHIVAKMMTTEMIKDLSSDTLLQQHGDLDLALDNCYSGDTVIIFPGEYQAANLALLTDDIIIKGVGKREEIMITSEPSRDSFVVSKADNVKLMHLSLIQQGTVDGIVVVESGHMTLENCILKCEGTGVCVLTGAALTITDSEITGAQGAGVELYPGSIAILERNEIHHCNNLRTSNSSKSTLGGVNMKVLPAPKLKMTNNHIYSNKGYGVSILQPMEQFFIVAEEALNKRASSGDKKDDKMLFKVMQNLNLEMNNNKIEANVKGDIRIVTS</sequence>
<evidence type="ECO:0000250" key="1">
    <source>
        <dbReference type="UniProtKB" id="Q3TTP0"/>
    </source>
</evidence>
<evidence type="ECO:0000255" key="2"/>
<evidence type="ECO:0000256" key="3">
    <source>
        <dbReference type="SAM" id="MobiDB-lite"/>
    </source>
</evidence>
<evidence type="ECO:0000269" key="4">
    <source>
    </source>
</evidence>
<evidence type="ECO:0000269" key="5">
    <source>
    </source>
</evidence>
<evidence type="ECO:0000303" key="6">
    <source>
    </source>
</evidence>
<evidence type="ECO:0000303" key="7">
    <source>
    </source>
</evidence>
<evidence type="ECO:0000305" key="8"/>
<evidence type="ECO:0000312" key="9">
    <source>
        <dbReference type="HGNC" id="HGNC:16788"/>
    </source>
</evidence>
<evidence type="ECO:0007744" key="10">
    <source>
    </source>
</evidence>
<name>SHP1L_HUMAN</name>
<dbReference type="EMBL" id="AF288397">
    <property type="protein sequence ID" value="AAG60616.1"/>
    <property type="molecule type" value="mRNA"/>
</dbReference>
<dbReference type="EMBL" id="AF288398">
    <property type="protein sequence ID" value="AAG60617.1"/>
    <property type="status" value="ALT_FRAME"/>
    <property type="molecule type" value="mRNA"/>
</dbReference>
<dbReference type="EMBL" id="AF297023">
    <property type="protein sequence ID" value="AAG45336.1"/>
    <property type="molecule type" value="Genomic_DNA"/>
</dbReference>
<dbReference type="EMBL" id="AF297016">
    <property type="protein sequence ID" value="AAG45336.1"/>
    <property type="status" value="JOINED"/>
    <property type="molecule type" value="Genomic_DNA"/>
</dbReference>
<dbReference type="EMBL" id="AF297017">
    <property type="protein sequence ID" value="AAG45336.1"/>
    <property type="status" value="JOINED"/>
    <property type="molecule type" value="Genomic_DNA"/>
</dbReference>
<dbReference type="EMBL" id="AF297018">
    <property type="protein sequence ID" value="AAG45336.1"/>
    <property type="status" value="JOINED"/>
    <property type="molecule type" value="Genomic_DNA"/>
</dbReference>
<dbReference type="EMBL" id="AF297019">
    <property type="protein sequence ID" value="AAG45336.1"/>
    <property type="status" value="JOINED"/>
    <property type="molecule type" value="Genomic_DNA"/>
</dbReference>
<dbReference type="EMBL" id="AF297020">
    <property type="protein sequence ID" value="AAG45336.1"/>
    <property type="status" value="JOINED"/>
    <property type="molecule type" value="Genomic_DNA"/>
</dbReference>
<dbReference type="EMBL" id="AF297021">
    <property type="protein sequence ID" value="AAG45336.1"/>
    <property type="status" value="JOINED"/>
    <property type="molecule type" value="Genomic_DNA"/>
</dbReference>
<dbReference type="EMBL" id="AF297022">
    <property type="protein sequence ID" value="AAG45336.1"/>
    <property type="status" value="JOINED"/>
    <property type="molecule type" value="Genomic_DNA"/>
</dbReference>
<dbReference type="EMBL" id="AF312863">
    <property type="protein sequence ID" value="AAG45336.1"/>
    <property type="status" value="JOINED"/>
    <property type="molecule type" value="Genomic_DNA"/>
</dbReference>
<dbReference type="EMBL" id="AL662837">
    <property type="status" value="NOT_ANNOTATED_CDS"/>
    <property type="molecule type" value="Genomic_DNA"/>
</dbReference>
<dbReference type="EMBL" id="AL450304">
    <property type="status" value="NOT_ANNOTATED_CDS"/>
    <property type="molecule type" value="Genomic_DNA"/>
</dbReference>
<dbReference type="EMBL" id="BC026084">
    <property type="protein sequence ID" value="AAH26084.1"/>
    <property type="molecule type" value="mRNA"/>
</dbReference>
<dbReference type="EMBL" id="BC050305">
    <property type="protein sequence ID" value="AAH50305.1"/>
    <property type="molecule type" value="mRNA"/>
</dbReference>
<dbReference type="EMBL" id="BC132764">
    <property type="protein sequence ID" value="AAI32765.1"/>
    <property type="molecule type" value="mRNA"/>
</dbReference>
<dbReference type="CCDS" id="CCDS30955.1">
    <molecule id="Q9BZQ2-3"/>
</dbReference>
<dbReference type="RefSeq" id="NP_001332857.1">
    <molecule id="Q9BZQ2-2"/>
    <property type="nucleotide sequence ID" value="NM_001345928.2"/>
</dbReference>
<dbReference type="RefSeq" id="NP_112195.2">
    <molecule id="Q9BZQ2-3"/>
    <property type="nucleotide sequence ID" value="NM_030933.4"/>
</dbReference>
<dbReference type="SMR" id="Q9BZQ2"/>
<dbReference type="BioGRID" id="123561">
    <property type="interactions" value="6"/>
</dbReference>
<dbReference type="FunCoup" id="Q9BZQ2">
    <property type="interactions" value="15"/>
</dbReference>
<dbReference type="IntAct" id="Q9BZQ2">
    <property type="interactions" value="8"/>
</dbReference>
<dbReference type="STRING" id="9606.ENSP00000356518"/>
<dbReference type="iPTMnet" id="Q9BZQ2"/>
<dbReference type="PhosphoSitePlus" id="Q9BZQ2"/>
<dbReference type="BioMuta" id="SHCBP1L"/>
<dbReference type="DMDM" id="145558866"/>
<dbReference type="MassIVE" id="Q9BZQ2"/>
<dbReference type="PaxDb" id="9606-ENSP00000356518"/>
<dbReference type="PeptideAtlas" id="Q9BZQ2"/>
<dbReference type="ProteomicsDB" id="79887">
    <molecule id="Q9BZQ2-2"/>
</dbReference>
<dbReference type="ProteomicsDB" id="79888">
    <molecule id="Q9BZQ2-3"/>
</dbReference>
<dbReference type="ProteomicsDB" id="79889">
    <molecule id="Q9BZQ2-4"/>
</dbReference>
<dbReference type="Antibodypedia" id="50328">
    <property type="antibodies" value="43 antibodies from 12 providers"/>
</dbReference>
<dbReference type="DNASU" id="81626"/>
<dbReference type="Ensembl" id="ENST00000367547.8">
    <molecule id="Q9BZQ2-3"/>
    <property type="protein sequence ID" value="ENSP00000356518.3"/>
    <property type="gene ID" value="ENSG00000157060.16"/>
</dbReference>
<dbReference type="GeneID" id="81626"/>
<dbReference type="KEGG" id="hsa:81626"/>
<dbReference type="MANE-Select" id="ENST00000367547.8">
    <property type="protein sequence ID" value="ENSP00000356518.3"/>
    <property type="RefSeq nucleotide sequence ID" value="NM_030933.4"/>
    <property type="RefSeq protein sequence ID" value="NP_112195.2"/>
</dbReference>
<dbReference type="UCSC" id="uc001gpu.4">
    <molecule id="Q9BZQ2-3"/>
    <property type="organism name" value="human"/>
</dbReference>
<dbReference type="AGR" id="HGNC:16788"/>
<dbReference type="CTD" id="81626"/>
<dbReference type="DisGeNET" id="81626"/>
<dbReference type="GeneCards" id="SHCBP1L"/>
<dbReference type="HGNC" id="HGNC:16788">
    <property type="gene designation" value="SHCBP1L"/>
</dbReference>
<dbReference type="HPA" id="ENSG00000157060">
    <property type="expression patterns" value="Tissue enriched (testis)"/>
</dbReference>
<dbReference type="MalaCards" id="SHCBP1L"/>
<dbReference type="MIM" id="619514">
    <property type="type" value="gene"/>
</dbReference>
<dbReference type="neXtProt" id="NX_Q9BZQ2"/>
<dbReference type="OpenTargets" id="ENSG00000157060"/>
<dbReference type="PharmGKB" id="PA25603"/>
<dbReference type="VEuPathDB" id="HostDB:ENSG00000157060"/>
<dbReference type="eggNOG" id="ENOG502QT5S">
    <property type="taxonomic scope" value="Eukaryota"/>
</dbReference>
<dbReference type="GeneTree" id="ENSGT00940000161173"/>
<dbReference type="HOGENOM" id="CLU_022717_0_0_1"/>
<dbReference type="InParanoid" id="Q9BZQ2"/>
<dbReference type="OMA" id="INLWCDM"/>
<dbReference type="OrthoDB" id="5978115at2759"/>
<dbReference type="PAN-GO" id="Q9BZQ2">
    <property type="GO annotations" value="3 GO annotations based on evolutionary models"/>
</dbReference>
<dbReference type="PhylomeDB" id="Q9BZQ2"/>
<dbReference type="TreeFam" id="TF329196"/>
<dbReference type="PathwayCommons" id="Q9BZQ2"/>
<dbReference type="SignaLink" id="Q9BZQ2"/>
<dbReference type="BioGRID-ORCS" id="81626">
    <property type="hits" value="23 hits in 1137 CRISPR screens"/>
</dbReference>
<dbReference type="ChiTaRS" id="SHCBP1L">
    <property type="organism name" value="human"/>
</dbReference>
<dbReference type="GenomeRNAi" id="81626"/>
<dbReference type="Pharos" id="Q9BZQ2">
    <property type="development level" value="Tdark"/>
</dbReference>
<dbReference type="PRO" id="PR:Q9BZQ2"/>
<dbReference type="Proteomes" id="UP000005640">
    <property type="component" value="Chromosome 1"/>
</dbReference>
<dbReference type="RNAct" id="Q9BZQ2">
    <property type="molecule type" value="protein"/>
</dbReference>
<dbReference type="Bgee" id="ENSG00000157060">
    <property type="expression patterns" value="Expressed in sperm and 56 other cell types or tissues"/>
</dbReference>
<dbReference type="GO" id="GO:0005737">
    <property type="term" value="C:cytoplasm"/>
    <property type="evidence" value="ECO:0007669"/>
    <property type="project" value="UniProtKB-KW"/>
</dbReference>
<dbReference type="GO" id="GO:0072687">
    <property type="term" value="C:meiotic spindle"/>
    <property type="evidence" value="ECO:0000250"/>
    <property type="project" value="UniProtKB"/>
</dbReference>
<dbReference type="GO" id="GO:0030154">
    <property type="term" value="P:cell differentiation"/>
    <property type="evidence" value="ECO:0007669"/>
    <property type="project" value="UniProtKB-KW"/>
</dbReference>
<dbReference type="GO" id="GO:0007112">
    <property type="term" value="P:male meiosis cytokinesis"/>
    <property type="evidence" value="ECO:0000318"/>
    <property type="project" value="GO_Central"/>
</dbReference>
<dbReference type="GO" id="GO:2001252">
    <property type="term" value="P:positive regulation of chromosome organization"/>
    <property type="evidence" value="ECO:0000250"/>
    <property type="project" value="UniProtKB"/>
</dbReference>
<dbReference type="GO" id="GO:0007283">
    <property type="term" value="P:spermatogenesis"/>
    <property type="evidence" value="ECO:0000250"/>
    <property type="project" value="UniProtKB"/>
</dbReference>
<dbReference type="FunFam" id="2.160.20.10:FF:000021">
    <property type="entry name" value="SHC binding and spindle associated 1 like"/>
    <property type="match status" value="1"/>
</dbReference>
<dbReference type="Gene3D" id="2.160.20.10">
    <property type="entry name" value="Single-stranded right-handed beta-helix, Pectin lyase-like"/>
    <property type="match status" value="1"/>
</dbReference>
<dbReference type="InterPro" id="IPR039448">
    <property type="entry name" value="Beta_helix"/>
</dbReference>
<dbReference type="InterPro" id="IPR006633">
    <property type="entry name" value="Carb-bd_sugar_hydrolysis-dom"/>
</dbReference>
<dbReference type="InterPro" id="IPR006626">
    <property type="entry name" value="PbH1"/>
</dbReference>
<dbReference type="InterPro" id="IPR012334">
    <property type="entry name" value="Pectin_lyas_fold"/>
</dbReference>
<dbReference type="InterPro" id="IPR011050">
    <property type="entry name" value="Pectin_lyase_fold/virulence"/>
</dbReference>
<dbReference type="InterPro" id="IPR045140">
    <property type="entry name" value="SHCBP1-like"/>
</dbReference>
<dbReference type="PANTHER" id="PTHR14695">
    <property type="entry name" value="SHC SH2-DOMAIN BINDING PROTEIN 1-RELATED"/>
    <property type="match status" value="1"/>
</dbReference>
<dbReference type="PANTHER" id="PTHR14695:SF7">
    <property type="entry name" value="TESTICULAR SPINDLE-ASSOCIATED PROTEIN SHCBP1L"/>
    <property type="match status" value="1"/>
</dbReference>
<dbReference type="Pfam" id="PF13229">
    <property type="entry name" value="Beta_helix"/>
    <property type="match status" value="1"/>
</dbReference>
<dbReference type="Pfam" id="PF23762">
    <property type="entry name" value="SHCBP_N"/>
    <property type="match status" value="1"/>
</dbReference>
<dbReference type="SMART" id="SM00722">
    <property type="entry name" value="CASH"/>
    <property type="match status" value="1"/>
</dbReference>
<dbReference type="SMART" id="SM00710">
    <property type="entry name" value="PbH1"/>
    <property type="match status" value="4"/>
</dbReference>
<dbReference type="SUPFAM" id="SSF51126">
    <property type="entry name" value="Pectin lyase-like"/>
    <property type="match status" value="1"/>
</dbReference>
<proteinExistence type="evidence at protein level"/>
<reference key="1">
    <citation type="journal article" date="2001" name="Genomics">
        <title>Cloning and characterization of 13 novel transcripts and the human RGS8 gene from the 1q25 region encompassing the hereditary prostate cancer (HPC1) locus.</title>
        <authorList>
            <person name="Sood R."/>
            <person name="Bonner T.I."/>
            <person name="Malakowska I."/>
            <person name="Stephan D.A."/>
            <person name="Robbins C.M."/>
            <person name="Connors T.D."/>
            <person name="Morgenbesser S.D."/>
            <person name="Su K."/>
            <person name="Faruque M.U."/>
            <person name="Pinkett H."/>
            <person name="Graham C."/>
            <person name="Baxevanis A.D."/>
            <person name="Klinger K.W."/>
            <person name="Landes G.M."/>
            <person name="Trent J.M."/>
            <person name="Carpten J.D."/>
        </authorList>
    </citation>
    <scope>NUCLEOTIDE SEQUENCE [MRNA] (ISOFORMS 2 AND 3)</scope>
    <scope>NUCLEOTIDE SEQUENCE [GENOMIC DNA] (ISOFORM 3)</scope>
    <scope>TISSUE SPECIFICITY</scope>
</reference>
<reference key="2">
    <citation type="journal article" date="2006" name="Nature">
        <title>The DNA sequence and biological annotation of human chromosome 1.</title>
        <authorList>
            <person name="Gregory S.G."/>
            <person name="Barlow K.F."/>
            <person name="McLay K.E."/>
            <person name="Kaul R."/>
            <person name="Swarbreck D."/>
            <person name="Dunham A."/>
            <person name="Scott C.E."/>
            <person name="Howe K.L."/>
            <person name="Woodfine K."/>
            <person name="Spencer C.C.A."/>
            <person name="Jones M.C."/>
            <person name="Gillson C."/>
            <person name="Searle S."/>
            <person name="Zhou Y."/>
            <person name="Kokocinski F."/>
            <person name="McDonald L."/>
            <person name="Evans R."/>
            <person name="Phillips K."/>
            <person name="Atkinson A."/>
            <person name="Cooper R."/>
            <person name="Jones C."/>
            <person name="Hall R.E."/>
            <person name="Andrews T.D."/>
            <person name="Lloyd C."/>
            <person name="Ainscough R."/>
            <person name="Almeida J.P."/>
            <person name="Ambrose K.D."/>
            <person name="Anderson F."/>
            <person name="Andrew R.W."/>
            <person name="Ashwell R.I.S."/>
            <person name="Aubin K."/>
            <person name="Babbage A.K."/>
            <person name="Bagguley C.L."/>
            <person name="Bailey J."/>
            <person name="Beasley H."/>
            <person name="Bethel G."/>
            <person name="Bird C.P."/>
            <person name="Bray-Allen S."/>
            <person name="Brown J.Y."/>
            <person name="Brown A.J."/>
            <person name="Buckley D."/>
            <person name="Burton J."/>
            <person name="Bye J."/>
            <person name="Carder C."/>
            <person name="Chapman J.C."/>
            <person name="Clark S.Y."/>
            <person name="Clarke G."/>
            <person name="Clee C."/>
            <person name="Cobley V."/>
            <person name="Collier R.E."/>
            <person name="Corby N."/>
            <person name="Coville G.J."/>
            <person name="Davies J."/>
            <person name="Deadman R."/>
            <person name="Dunn M."/>
            <person name="Earthrowl M."/>
            <person name="Ellington A.G."/>
            <person name="Errington H."/>
            <person name="Frankish A."/>
            <person name="Frankland J."/>
            <person name="French L."/>
            <person name="Garner P."/>
            <person name="Garnett J."/>
            <person name="Gay L."/>
            <person name="Ghori M.R.J."/>
            <person name="Gibson R."/>
            <person name="Gilby L.M."/>
            <person name="Gillett W."/>
            <person name="Glithero R.J."/>
            <person name="Grafham D.V."/>
            <person name="Griffiths C."/>
            <person name="Griffiths-Jones S."/>
            <person name="Grocock R."/>
            <person name="Hammond S."/>
            <person name="Harrison E.S.I."/>
            <person name="Hart E."/>
            <person name="Haugen E."/>
            <person name="Heath P.D."/>
            <person name="Holmes S."/>
            <person name="Holt K."/>
            <person name="Howden P.J."/>
            <person name="Hunt A.R."/>
            <person name="Hunt S.E."/>
            <person name="Hunter G."/>
            <person name="Isherwood J."/>
            <person name="James R."/>
            <person name="Johnson C."/>
            <person name="Johnson D."/>
            <person name="Joy A."/>
            <person name="Kay M."/>
            <person name="Kershaw J.K."/>
            <person name="Kibukawa M."/>
            <person name="Kimberley A.M."/>
            <person name="King A."/>
            <person name="Knights A.J."/>
            <person name="Lad H."/>
            <person name="Laird G."/>
            <person name="Lawlor S."/>
            <person name="Leongamornlert D.A."/>
            <person name="Lloyd D.M."/>
            <person name="Loveland J."/>
            <person name="Lovell J."/>
            <person name="Lush M.J."/>
            <person name="Lyne R."/>
            <person name="Martin S."/>
            <person name="Mashreghi-Mohammadi M."/>
            <person name="Matthews L."/>
            <person name="Matthews N.S.W."/>
            <person name="McLaren S."/>
            <person name="Milne S."/>
            <person name="Mistry S."/>
            <person name="Moore M.J.F."/>
            <person name="Nickerson T."/>
            <person name="O'Dell C.N."/>
            <person name="Oliver K."/>
            <person name="Palmeiri A."/>
            <person name="Palmer S.A."/>
            <person name="Parker A."/>
            <person name="Patel D."/>
            <person name="Pearce A.V."/>
            <person name="Peck A.I."/>
            <person name="Pelan S."/>
            <person name="Phelps K."/>
            <person name="Phillimore B.J."/>
            <person name="Plumb R."/>
            <person name="Rajan J."/>
            <person name="Raymond C."/>
            <person name="Rouse G."/>
            <person name="Saenphimmachak C."/>
            <person name="Sehra H.K."/>
            <person name="Sheridan E."/>
            <person name="Shownkeen R."/>
            <person name="Sims S."/>
            <person name="Skuce C.D."/>
            <person name="Smith M."/>
            <person name="Steward C."/>
            <person name="Subramanian S."/>
            <person name="Sycamore N."/>
            <person name="Tracey A."/>
            <person name="Tromans A."/>
            <person name="Van Helmond Z."/>
            <person name="Wall M."/>
            <person name="Wallis J.M."/>
            <person name="White S."/>
            <person name="Whitehead S.L."/>
            <person name="Wilkinson J.E."/>
            <person name="Willey D.L."/>
            <person name="Williams H."/>
            <person name="Wilming L."/>
            <person name="Wray P.W."/>
            <person name="Wu Z."/>
            <person name="Coulson A."/>
            <person name="Vaudin M."/>
            <person name="Sulston J.E."/>
            <person name="Durbin R.M."/>
            <person name="Hubbard T."/>
            <person name="Wooster R."/>
            <person name="Dunham I."/>
            <person name="Carter N.P."/>
            <person name="McVean G."/>
            <person name="Ross M.T."/>
            <person name="Harrow J."/>
            <person name="Olson M.V."/>
            <person name="Beck S."/>
            <person name="Rogers J."/>
            <person name="Bentley D.R."/>
        </authorList>
    </citation>
    <scope>NUCLEOTIDE SEQUENCE [LARGE SCALE GENOMIC DNA]</scope>
</reference>
<reference key="3">
    <citation type="journal article" date="2004" name="Genome Res.">
        <title>The status, quality, and expansion of the NIH full-length cDNA project: the Mammalian Gene Collection (MGC).</title>
        <authorList>
            <consortium name="The MGC Project Team"/>
        </authorList>
    </citation>
    <scope>NUCLEOTIDE SEQUENCE [LARGE SCALE MRNA] (ISOFORMS 3 AND 4)</scope>
    <source>
        <tissue>Testis</tissue>
    </source>
</reference>
<reference key="4">
    <citation type="journal article" date="2008" name="J. Proteome Res.">
        <title>Combining protein-based IMAC, peptide-based IMAC, and MudPIT for efficient phosphoproteomic analysis.</title>
        <authorList>
            <person name="Cantin G.T."/>
            <person name="Yi W."/>
            <person name="Lu B."/>
            <person name="Park S.K."/>
            <person name="Xu T."/>
            <person name="Lee J.-D."/>
            <person name="Yates J.R. III"/>
        </authorList>
    </citation>
    <scope>PHOSPHORYLATION [LARGE SCALE ANALYSIS] AT SER-8</scope>
    <scope>IDENTIFICATION BY MASS SPECTROMETRY [LARGE SCALE ANALYSIS]</scope>
    <source>
        <tissue>Cervix carcinoma</tissue>
    </source>
</reference>
<reference key="5">
    <citation type="journal article" date="2014" name="Mol. Hum. Reprod.">
        <title>SHCBP1L, a conserved protein in mammals, is predominantly expressed in male germ cells and maintains spindle stability during meiosis in testis.</title>
        <authorList>
            <person name="Liu M."/>
            <person name="Shi X."/>
            <person name="Bi Y."/>
            <person name="Qi L."/>
            <person name="Guo X."/>
            <person name="Wang L."/>
            <person name="Zhou Z."/>
            <person name="Sha J."/>
        </authorList>
    </citation>
    <scope>TISSUE SPECIFICITY</scope>
</reference>
<accession>Q9BZQ2</accession>
<accession>Q4G195</accession>
<accession>Q9BZQ3</accession>
<accession>Q9H2B6</accession>